<comment type="function">
    <text evidence="1">Component of the PAN1 actin cytoskeleton-regulatory complex required for the internalization of endosomes during actin-coupled endocytosis. The complex links the site of endocytosis to the cell membrane-associated actin cytoskeleton. Mediates uptake of external molecules and vacuolar degradation of plasma membrane proteins. Plays a role in the proper organization of the cell membrane-associated actin cytoskeleton and promotes its destabilization (By similarity).</text>
</comment>
<comment type="subunit">
    <text evidence="1">Component of the PAN1 actin cytoskeleton-regulatory complex.</text>
</comment>
<comment type="subcellular location">
    <subcellularLocation>
        <location evidence="1">Cell membrane</location>
        <topology evidence="1">Peripheral membrane protein</topology>
        <orientation evidence="1">Cytoplasmic side</orientation>
    </subcellularLocation>
    <subcellularLocation>
        <location evidence="1">Endosome membrane</location>
        <topology evidence="1">Peripheral membrane protein</topology>
        <orientation evidence="1">Cytoplasmic side</orientation>
    </subcellularLocation>
    <subcellularLocation>
        <location evidence="1">Cytoplasm</location>
        <location evidence="1">Cytoskeleton</location>
        <location evidence="1">Actin patch</location>
    </subcellularLocation>
    <text evidence="1">Cytoplasmic and cortical actin patches.</text>
</comment>
<comment type="similarity">
    <text evidence="7">Belongs to the PAN1 family.</text>
</comment>
<protein>
    <recommendedName>
        <fullName>Actin cytoskeleton-regulatory complex protein pan1</fullName>
    </recommendedName>
</protein>
<dbReference type="EMBL" id="DS499601">
    <property type="protein sequence ID" value="EDP48226.1"/>
    <property type="molecule type" value="Genomic_DNA"/>
</dbReference>
<dbReference type="SMR" id="B0YC95"/>
<dbReference type="EnsemblFungi" id="EDP48226">
    <property type="protein sequence ID" value="EDP48226"/>
    <property type="gene ID" value="AFUB_089400"/>
</dbReference>
<dbReference type="VEuPathDB" id="FungiDB:AFUB_089400"/>
<dbReference type="HOGENOM" id="CLU_001963_1_0_1"/>
<dbReference type="OrthoDB" id="126988at5052"/>
<dbReference type="PhylomeDB" id="B0YC95"/>
<dbReference type="Proteomes" id="UP000001699">
    <property type="component" value="Unassembled WGS sequence"/>
</dbReference>
<dbReference type="GO" id="GO:0030479">
    <property type="term" value="C:actin cortical patch"/>
    <property type="evidence" value="ECO:0007669"/>
    <property type="project" value="UniProtKB-SubCell"/>
</dbReference>
<dbReference type="GO" id="GO:0010008">
    <property type="term" value="C:endosome membrane"/>
    <property type="evidence" value="ECO:0007669"/>
    <property type="project" value="UniProtKB-SubCell"/>
</dbReference>
<dbReference type="GO" id="GO:0005886">
    <property type="term" value="C:plasma membrane"/>
    <property type="evidence" value="ECO:0007669"/>
    <property type="project" value="UniProtKB-SubCell"/>
</dbReference>
<dbReference type="GO" id="GO:0003779">
    <property type="term" value="F:actin binding"/>
    <property type="evidence" value="ECO:0007669"/>
    <property type="project" value="UniProtKB-KW"/>
</dbReference>
<dbReference type="GO" id="GO:0005509">
    <property type="term" value="F:calcium ion binding"/>
    <property type="evidence" value="ECO:0007669"/>
    <property type="project" value="InterPro"/>
</dbReference>
<dbReference type="GO" id="GO:0006897">
    <property type="term" value="P:endocytosis"/>
    <property type="evidence" value="ECO:0007669"/>
    <property type="project" value="UniProtKB-KW"/>
</dbReference>
<dbReference type="GO" id="GO:0016197">
    <property type="term" value="P:endosomal transport"/>
    <property type="evidence" value="ECO:0007669"/>
    <property type="project" value="TreeGrafter"/>
</dbReference>
<dbReference type="CDD" id="cd00052">
    <property type="entry name" value="EH"/>
    <property type="match status" value="2"/>
</dbReference>
<dbReference type="CDD" id="cd22070">
    <property type="entry name" value="WH2_Pan1-like"/>
    <property type="match status" value="1"/>
</dbReference>
<dbReference type="FunFam" id="1.10.238.10:FF:000349">
    <property type="entry name" value="Actin cytoskeleton-regulatory complex protein PAN1"/>
    <property type="match status" value="1"/>
</dbReference>
<dbReference type="Gene3D" id="1.10.238.10">
    <property type="entry name" value="EF-hand"/>
    <property type="match status" value="2"/>
</dbReference>
<dbReference type="InterPro" id="IPR013182">
    <property type="entry name" value="DUF1720"/>
</dbReference>
<dbReference type="InterPro" id="IPR011992">
    <property type="entry name" value="EF-hand-dom_pair"/>
</dbReference>
<dbReference type="InterPro" id="IPR002048">
    <property type="entry name" value="EF_hand_dom"/>
</dbReference>
<dbReference type="InterPro" id="IPR000261">
    <property type="entry name" value="EH_dom"/>
</dbReference>
<dbReference type="InterPro" id="IPR003124">
    <property type="entry name" value="WH2_dom"/>
</dbReference>
<dbReference type="PANTHER" id="PTHR11216:SF170">
    <property type="entry name" value="DYNAMIN ASSOCIATED PROTEIN 160, ISOFORM D"/>
    <property type="match status" value="1"/>
</dbReference>
<dbReference type="PANTHER" id="PTHR11216">
    <property type="entry name" value="EH DOMAIN"/>
    <property type="match status" value="1"/>
</dbReference>
<dbReference type="Pfam" id="PF08226">
    <property type="entry name" value="DUF1720"/>
    <property type="match status" value="1"/>
</dbReference>
<dbReference type="Pfam" id="PF12763">
    <property type="entry name" value="EH"/>
    <property type="match status" value="2"/>
</dbReference>
<dbReference type="Pfam" id="PF02205">
    <property type="entry name" value="WH2"/>
    <property type="match status" value="1"/>
</dbReference>
<dbReference type="SMART" id="SM00054">
    <property type="entry name" value="EFh"/>
    <property type="match status" value="2"/>
</dbReference>
<dbReference type="SMART" id="SM00027">
    <property type="entry name" value="EH"/>
    <property type="match status" value="2"/>
</dbReference>
<dbReference type="SMART" id="SM00246">
    <property type="entry name" value="WH2"/>
    <property type="match status" value="1"/>
</dbReference>
<dbReference type="SUPFAM" id="SSF47473">
    <property type="entry name" value="EF-hand"/>
    <property type="match status" value="2"/>
</dbReference>
<dbReference type="PROSITE" id="PS50222">
    <property type="entry name" value="EF_HAND_2"/>
    <property type="match status" value="2"/>
</dbReference>
<dbReference type="PROSITE" id="PS50031">
    <property type="entry name" value="EH"/>
    <property type="match status" value="2"/>
</dbReference>
<dbReference type="PROSITE" id="PS51082">
    <property type="entry name" value="WH2"/>
    <property type="match status" value="1"/>
</dbReference>
<evidence type="ECO:0000250" key="1"/>
<evidence type="ECO:0000255" key="2"/>
<evidence type="ECO:0000255" key="3">
    <source>
        <dbReference type="PROSITE-ProRule" id="PRU00077"/>
    </source>
</evidence>
<evidence type="ECO:0000255" key="4">
    <source>
        <dbReference type="PROSITE-ProRule" id="PRU00406"/>
    </source>
</evidence>
<evidence type="ECO:0000255" key="5">
    <source>
        <dbReference type="PROSITE-ProRule" id="PRU00448"/>
    </source>
</evidence>
<evidence type="ECO:0000256" key="6">
    <source>
        <dbReference type="SAM" id="MobiDB-lite"/>
    </source>
</evidence>
<evidence type="ECO:0000305" key="7"/>
<proteinExistence type="inferred from homology"/>
<organism>
    <name type="scientific">Aspergillus fumigatus (strain CBS 144.89 / FGSC A1163 / CEA10)</name>
    <name type="common">Neosartorya fumigata</name>
    <dbReference type="NCBI Taxonomy" id="451804"/>
    <lineage>
        <taxon>Eukaryota</taxon>
        <taxon>Fungi</taxon>
        <taxon>Dikarya</taxon>
        <taxon>Ascomycota</taxon>
        <taxon>Pezizomycotina</taxon>
        <taxon>Eurotiomycetes</taxon>
        <taxon>Eurotiomycetidae</taxon>
        <taxon>Eurotiales</taxon>
        <taxon>Aspergillaceae</taxon>
        <taxon>Aspergillus</taxon>
        <taxon>Aspergillus subgen. Fumigati</taxon>
    </lineage>
</organism>
<keyword id="KW-0009">Actin-binding</keyword>
<keyword id="KW-1003">Cell membrane</keyword>
<keyword id="KW-0175">Coiled coil</keyword>
<keyword id="KW-0963">Cytoplasm</keyword>
<keyword id="KW-0206">Cytoskeleton</keyword>
<keyword id="KW-0254">Endocytosis</keyword>
<keyword id="KW-0967">Endosome</keyword>
<keyword id="KW-0472">Membrane</keyword>
<keyword id="KW-0677">Repeat</keyword>
<feature type="chain" id="PRO_0000349465" description="Actin cytoskeleton-regulatory complex protein pan1">
    <location>
        <begin position="1"/>
        <end position="1467"/>
    </location>
</feature>
<feature type="domain" description="EH 1" evidence="3">
    <location>
        <begin position="169"/>
        <end position="257"/>
    </location>
</feature>
<feature type="domain" description="EF-hand 1" evidence="5">
    <location>
        <begin position="201"/>
        <end position="236"/>
    </location>
</feature>
<feature type="domain" description="EH 2" evidence="3">
    <location>
        <begin position="458"/>
        <end position="547"/>
    </location>
</feature>
<feature type="domain" description="EF-hand 2" evidence="5">
    <location>
        <begin position="491"/>
        <end position="526"/>
    </location>
</feature>
<feature type="domain" description="WH2" evidence="4">
    <location>
        <begin position="1434"/>
        <end position="1451"/>
    </location>
</feature>
<feature type="region of interest" description="Disordered" evidence="6">
    <location>
        <begin position="1"/>
        <end position="157"/>
    </location>
</feature>
<feature type="region of interest" description="Disordered" evidence="6">
    <location>
        <begin position="266"/>
        <end position="376"/>
    </location>
</feature>
<feature type="region of interest" description="Disordered" evidence="6">
    <location>
        <begin position="613"/>
        <end position="643"/>
    </location>
</feature>
<feature type="region of interest" description="Disordered" evidence="6">
    <location>
        <begin position="822"/>
        <end position="864"/>
    </location>
</feature>
<feature type="region of interest" description="Disordered" evidence="6">
    <location>
        <begin position="888"/>
        <end position="1087"/>
    </location>
</feature>
<feature type="region of interest" description="Disordered" evidence="6">
    <location>
        <begin position="1101"/>
        <end position="1467"/>
    </location>
</feature>
<feature type="coiled-coil region" evidence="2">
    <location>
        <begin position="634"/>
        <end position="758"/>
    </location>
</feature>
<feature type="coiled-coil region" evidence="2">
    <location>
        <begin position="965"/>
        <end position="1162"/>
    </location>
</feature>
<feature type="compositionally biased region" description="Low complexity" evidence="6">
    <location>
        <begin position="25"/>
        <end position="48"/>
    </location>
</feature>
<feature type="compositionally biased region" description="Polar residues" evidence="6">
    <location>
        <begin position="50"/>
        <end position="75"/>
    </location>
</feature>
<feature type="compositionally biased region" description="Low complexity" evidence="6">
    <location>
        <begin position="77"/>
        <end position="101"/>
    </location>
</feature>
<feature type="compositionally biased region" description="Polar residues" evidence="6">
    <location>
        <begin position="129"/>
        <end position="139"/>
    </location>
</feature>
<feature type="compositionally biased region" description="Pro residues" evidence="6">
    <location>
        <begin position="292"/>
        <end position="301"/>
    </location>
</feature>
<feature type="compositionally biased region" description="Polar residues" evidence="6">
    <location>
        <begin position="305"/>
        <end position="314"/>
    </location>
</feature>
<feature type="compositionally biased region" description="Polar residues" evidence="6">
    <location>
        <begin position="340"/>
        <end position="370"/>
    </location>
</feature>
<feature type="compositionally biased region" description="Basic and acidic residues" evidence="6">
    <location>
        <begin position="892"/>
        <end position="912"/>
    </location>
</feature>
<feature type="compositionally biased region" description="Low complexity" evidence="6">
    <location>
        <begin position="919"/>
        <end position="934"/>
    </location>
</feature>
<feature type="compositionally biased region" description="Basic and acidic residues" evidence="6">
    <location>
        <begin position="935"/>
        <end position="953"/>
    </location>
</feature>
<feature type="compositionally biased region" description="Basic and acidic residues" evidence="6">
    <location>
        <begin position="973"/>
        <end position="1009"/>
    </location>
</feature>
<feature type="compositionally biased region" description="Basic and acidic residues" evidence="6">
    <location>
        <begin position="1054"/>
        <end position="1087"/>
    </location>
</feature>
<feature type="compositionally biased region" description="Basic and acidic residues" evidence="6">
    <location>
        <begin position="1101"/>
        <end position="1129"/>
    </location>
</feature>
<feature type="compositionally biased region" description="Basic and acidic residues" evidence="6">
    <location>
        <begin position="1136"/>
        <end position="1153"/>
    </location>
</feature>
<feature type="compositionally biased region" description="Acidic residues" evidence="6">
    <location>
        <begin position="1154"/>
        <end position="1165"/>
    </location>
</feature>
<feature type="compositionally biased region" description="Polar residues" evidence="6">
    <location>
        <begin position="1171"/>
        <end position="1182"/>
    </location>
</feature>
<feature type="compositionally biased region" description="Low complexity" evidence="6">
    <location>
        <begin position="1183"/>
        <end position="1197"/>
    </location>
</feature>
<feature type="compositionally biased region" description="Basic and acidic residues" evidence="6">
    <location>
        <begin position="1279"/>
        <end position="1288"/>
    </location>
</feature>
<feature type="compositionally biased region" description="Pro residues" evidence="6">
    <location>
        <begin position="1369"/>
        <end position="1381"/>
    </location>
</feature>
<feature type="compositionally biased region" description="Pro residues" evidence="6">
    <location>
        <begin position="1389"/>
        <end position="1430"/>
    </location>
</feature>
<sequence length="1467" mass="159394">MYSSSNSFLGGVNNARPGQPPFMQQPPYSQLPQGQQQIPQQTGFQPQPTGYGSQSASHLQPQPTGFPTGQLQPQFTGFPGAAPPQQQQQFGGYQAPAQQPQLTGYPPQSQPPSLQVPSTTGLPTRLAPRTSSEIANSFSDGAGVAPPPPPKSSGSKIPNIRLSFITAQDQAKFEQLFKSAVGDSQTMDGEKAKELLLRSRLPGSELSKIWVLSDTTKSGQLFFPEFALAMYLCNLRITGRELPSTLPDKIKNEVSGMVDIISFGVPDTEPQGAARTNVPSFDAPLLENKSAPPAPQHPKPQQPSNAQFLSQLAAQPTGFGPQATGLQPNQPSLLGANATLAPQTTGFPGQSQQQYLHSQPTGLMTNPQATGYNGPRPPLPPMPTGFGSNLSSMQTGGLAAQPTGIPGQWGFVNAPSSGLPNIEALKQQLMPQPGREGGFTTAGLSGNASIPWAITKEEKKIYDDLFRAWDGLHKGFIGGDTAIEIMGQSGLDRKDLERIWTLADPNNRGRLNMDEFAVAMHLIYRKLNGYPVPNRLPPELIPPSTRNLNDSIGAVKSLLSQDAESRKASGAFLQPQKTGVSYLKEHSFRGGARSPGFGRKDATLFKNNDEAAAGYRSSARRRVGNDARPSSPPTSQASEEELSVEQLKKKIRETQIMLDAVDFKDENRAEEDEVLDRRDRLEAESLMDRTRRVQDDIDTHPNAVFRKLDNGAERRSLRRQLQAFEDQVPQIASEVRRIEREIADAKLELFRLKDAKAHPNSAANIVGTGPGGTVTEADRIKARARARMQARAAELAGRPVPASVDDDGAAVRRLEAESASIRADREKNEAMTRDVEESVREFTRSLEDSLKEEGETSTREHERRRWEDALGVEDVIRDFIYDLQRGSRTAHIRKEEESRASAQEQRLRHEEPSPGVSRLSPAPSAGSAGSLPGSTHEDRVAAARERAQRRIAERMAAAGLKPHTDTSETLLQRQEREKREREERLRRAEEEDAKREQERQRRLAEEQRSTSDTPAKPVGKKPPPAPPSRRGRTDSAGQAEVKKAAEETITAEQAAREQAIREEQQAQEEETNRLEMEAQKREEELLKEKEAQEARLRALEEQVRQGKIRKQEEKRRKEEAERLAKEKEAALAAQRAEIERAKERERQLQLELERLDEESSSDDEGPVNITPEDSTPTQSQLLPTVTPAAPVSAPESEQAGSPEDTSSQAPPVDFKLETESKNPYFKITHQATDTQVVSSPPVPQPSFTSPKADVHSTNPFHRLAKQETSKPAFTGSAPLERKSRARPEADDDWSAAGSEFDSSDDDDDERPGGGSAKQLASILFGTMAPPRPLSAMDDKSPSKSSTPVQDSPVASLPVPESNGSLSAPAAPPPPPPPPPAAVPSYDPSVAPPPPPAPPMAPPAPPPGPPPPPGPPPPPAPPAASGPPTPAGAPDRSALLASIQKGKGLRKVQTNDRSTSSIAGRVLD</sequence>
<accession>B0YC95</accession>
<name>PAN1_ASPFC</name>
<gene>
    <name type="primary">pan1</name>
    <name type="ORF">AFUB_089400</name>
</gene>
<reference key="1">
    <citation type="journal article" date="2008" name="PLoS Genet.">
        <title>Genomic islands in the pathogenic filamentous fungus Aspergillus fumigatus.</title>
        <authorList>
            <person name="Fedorova N.D."/>
            <person name="Khaldi N."/>
            <person name="Joardar V.S."/>
            <person name="Maiti R."/>
            <person name="Amedeo P."/>
            <person name="Anderson M.J."/>
            <person name="Crabtree J."/>
            <person name="Silva J.C."/>
            <person name="Badger J.H."/>
            <person name="Albarraq A."/>
            <person name="Angiuoli S."/>
            <person name="Bussey H."/>
            <person name="Bowyer P."/>
            <person name="Cotty P.J."/>
            <person name="Dyer P.S."/>
            <person name="Egan A."/>
            <person name="Galens K."/>
            <person name="Fraser-Liggett C.M."/>
            <person name="Haas B.J."/>
            <person name="Inman J.M."/>
            <person name="Kent R."/>
            <person name="Lemieux S."/>
            <person name="Malavazi I."/>
            <person name="Orvis J."/>
            <person name="Roemer T."/>
            <person name="Ronning C.M."/>
            <person name="Sundaram J.P."/>
            <person name="Sutton G."/>
            <person name="Turner G."/>
            <person name="Venter J.C."/>
            <person name="White O.R."/>
            <person name="Whitty B.R."/>
            <person name="Youngman P."/>
            <person name="Wolfe K.H."/>
            <person name="Goldman G.H."/>
            <person name="Wortman J.R."/>
            <person name="Jiang B."/>
            <person name="Denning D.W."/>
            <person name="Nierman W.C."/>
        </authorList>
    </citation>
    <scope>NUCLEOTIDE SEQUENCE [LARGE SCALE GENOMIC DNA]</scope>
    <source>
        <strain>CBS 144.89 / FGSC A1163 / CEA10</strain>
    </source>
</reference>